<comment type="function">
    <text evidence="1">Required for the formation of a threonylcarbamoyl group on adenosine at position 37 (t(6)A37) in tRNAs that read codons beginning with adenine. Is involved in the transfer of the threonylcarbamoyl moiety of threonylcarbamoyl-AMP (TC-AMP) to the N6 group of A37, together with TsaE and TsaB. TsaD likely plays a direct catalytic role in this reaction.</text>
</comment>
<comment type="catalytic activity">
    <reaction evidence="1">
        <text>L-threonylcarbamoyladenylate + adenosine(37) in tRNA = N(6)-L-threonylcarbamoyladenosine(37) in tRNA + AMP + H(+)</text>
        <dbReference type="Rhea" id="RHEA:37059"/>
        <dbReference type="Rhea" id="RHEA-COMP:10162"/>
        <dbReference type="Rhea" id="RHEA-COMP:10163"/>
        <dbReference type="ChEBI" id="CHEBI:15378"/>
        <dbReference type="ChEBI" id="CHEBI:73682"/>
        <dbReference type="ChEBI" id="CHEBI:74411"/>
        <dbReference type="ChEBI" id="CHEBI:74418"/>
        <dbReference type="ChEBI" id="CHEBI:456215"/>
        <dbReference type="EC" id="2.3.1.234"/>
    </reaction>
</comment>
<comment type="cofactor">
    <cofactor evidence="1">
        <name>Fe(2+)</name>
        <dbReference type="ChEBI" id="CHEBI:29033"/>
    </cofactor>
    <text evidence="1">Binds 1 Fe(2+) ion per subunit.</text>
</comment>
<comment type="subcellular location">
    <subcellularLocation>
        <location evidence="1">Cytoplasm</location>
    </subcellularLocation>
</comment>
<comment type="similarity">
    <text evidence="1">Belongs to the KAE1 / TsaD family.</text>
</comment>
<evidence type="ECO:0000255" key="1">
    <source>
        <dbReference type="HAMAP-Rule" id="MF_01445"/>
    </source>
</evidence>
<accession>Q65N07</accession>
<accession>Q62YF5</accession>
<keyword id="KW-0012">Acyltransferase</keyword>
<keyword id="KW-0963">Cytoplasm</keyword>
<keyword id="KW-0408">Iron</keyword>
<keyword id="KW-0479">Metal-binding</keyword>
<keyword id="KW-1185">Reference proteome</keyword>
<keyword id="KW-0808">Transferase</keyword>
<keyword id="KW-0819">tRNA processing</keyword>
<proteinExistence type="inferred from homology"/>
<sequence>MNHKKDLYVLGIETSCDETAAAIVKNGTDIISNVVASQIESHKRFGGVVPEIASRHHVEQITIVLEEAFAQADMTFDDIDAIAVTEGPGLVGALLIGVNAAKALSFARGIPLVGVHHIAGHIYANRLVQDIQFPAIALVVSGGHTELVYMKEHGSFEVIGETLDDAAGEAYDKVARTMGLPYPGGPHIDKLAQKGEANVPLPRAWLEEGSYHFSFSGLKSAVINTLHNASQKGETIAPEDLSASFQESVIDVLVTKTERAAEAYGVKQVLLAGGVAANKGLRAALEKTFSSRPEIELLIPPLSLCTDNAAMIAAAGTVAFEKGIRGKYDMNGQPGLDLTSY</sequence>
<name>TSAD_BACLD</name>
<dbReference type="EC" id="2.3.1.234" evidence="1"/>
<dbReference type="EMBL" id="CP000002">
    <property type="protein sequence ID" value="AAU22203.1"/>
    <property type="molecule type" value="Genomic_DNA"/>
</dbReference>
<dbReference type="EMBL" id="AE017333">
    <property type="protein sequence ID" value="AAU39557.1"/>
    <property type="molecule type" value="Genomic_DNA"/>
</dbReference>
<dbReference type="RefSeq" id="WP_003179232.1">
    <property type="nucleotide sequence ID" value="NC_006322.1"/>
</dbReference>
<dbReference type="SMR" id="Q65N07"/>
<dbReference type="STRING" id="279010.BL00845"/>
<dbReference type="GeneID" id="92862800"/>
<dbReference type="KEGG" id="bld:BLi00615"/>
<dbReference type="KEGG" id="bli:BL00845"/>
<dbReference type="eggNOG" id="COG0533">
    <property type="taxonomic scope" value="Bacteria"/>
</dbReference>
<dbReference type="HOGENOM" id="CLU_023208_0_2_9"/>
<dbReference type="Proteomes" id="UP000000606">
    <property type="component" value="Chromosome"/>
</dbReference>
<dbReference type="GO" id="GO:0005737">
    <property type="term" value="C:cytoplasm"/>
    <property type="evidence" value="ECO:0007669"/>
    <property type="project" value="UniProtKB-SubCell"/>
</dbReference>
<dbReference type="GO" id="GO:0005506">
    <property type="term" value="F:iron ion binding"/>
    <property type="evidence" value="ECO:0007669"/>
    <property type="project" value="UniProtKB-UniRule"/>
</dbReference>
<dbReference type="GO" id="GO:0061711">
    <property type="term" value="F:N(6)-L-threonylcarbamoyladenine synthase activity"/>
    <property type="evidence" value="ECO:0007669"/>
    <property type="project" value="UniProtKB-EC"/>
</dbReference>
<dbReference type="GO" id="GO:0002949">
    <property type="term" value="P:tRNA threonylcarbamoyladenosine modification"/>
    <property type="evidence" value="ECO:0007669"/>
    <property type="project" value="UniProtKB-UniRule"/>
</dbReference>
<dbReference type="CDD" id="cd24133">
    <property type="entry name" value="ASKHA_NBD_TsaD_bac"/>
    <property type="match status" value="1"/>
</dbReference>
<dbReference type="FunFam" id="3.30.420.40:FF:000012">
    <property type="entry name" value="tRNA N6-adenosine threonylcarbamoyltransferase"/>
    <property type="match status" value="1"/>
</dbReference>
<dbReference type="FunFam" id="3.30.420.40:FF:000040">
    <property type="entry name" value="tRNA N6-adenosine threonylcarbamoyltransferase"/>
    <property type="match status" value="1"/>
</dbReference>
<dbReference type="Gene3D" id="3.30.420.40">
    <property type="match status" value="2"/>
</dbReference>
<dbReference type="HAMAP" id="MF_01445">
    <property type="entry name" value="TsaD"/>
    <property type="match status" value="1"/>
</dbReference>
<dbReference type="InterPro" id="IPR043129">
    <property type="entry name" value="ATPase_NBD"/>
</dbReference>
<dbReference type="InterPro" id="IPR000905">
    <property type="entry name" value="Gcp-like_dom"/>
</dbReference>
<dbReference type="InterPro" id="IPR017861">
    <property type="entry name" value="KAE1/TsaD"/>
</dbReference>
<dbReference type="InterPro" id="IPR022450">
    <property type="entry name" value="TsaD"/>
</dbReference>
<dbReference type="NCBIfam" id="TIGR00329">
    <property type="entry name" value="gcp_kae1"/>
    <property type="match status" value="1"/>
</dbReference>
<dbReference type="NCBIfam" id="TIGR03723">
    <property type="entry name" value="T6A_TsaD_YgjD"/>
    <property type="match status" value="1"/>
</dbReference>
<dbReference type="PANTHER" id="PTHR11735">
    <property type="entry name" value="TRNA N6-ADENOSINE THREONYLCARBAMOYLTRANSFERASE"/>
    <property type="match status" value="1"/>
</dbReference>
<dbReference type="PANTHER" id="PTHR11735:SF6">
    <property type="entry name" value="TRNA N6-ADENOSINE THREONYLCARBAMOYLTRANSFERASE, MITOCHONDRIAL"/>
    <property type="match status" value="1"/>
</dbReference>
<dbReference type="Pfam" id="PF00814">
    <property type="entry name" value="TsaD"/>
    <property type="match status" value="1"/>
</dbReference>
<dbReference type="PRINTS" id="PR00789">
    <property type="entry name" value="OSIALOPTASE"/>
</dbReference>
<dbReference type="SUPFAM" id="SSF53067">
    <property type="entry name" value="Actin-like ATPase domain"/>
    <property type="match status" value="2"/>
</dbReference>
<protein>
    <recommendedName>
        <fullName evidence="1">tRNA N6-adenosine threonylcarbamoyltransferase</fullName>
        <ecNumber evidence="1">2.3.1.234</ecNumber>
    </recommendedName>
    <alternativeName>
        <fullName evidence="1">N6-L-threonylcarbamoyladenine synthase</fullName>
        <shortName evidence="1">t(6)A synthase</shortName>
    </alternativeName>
    <alternativeName>
        <fullName evidence="1">t(6)A37 threonylcarbamoyladenosine biosynthesis protein TsaD</fullName>
    </alternativeName>
    <alternativeName>
        <fullName evidence="1">tRNA threonylcarbamoyladenosine biosynthesis protein TsaD</fullName>
    </alternativeName>
</protein>
<feature type="chain" id="PRO_0000303268" description="tRNA N6-adenosine threonylcarbamoyltransferase">
    <location>
        <begin position="1"/>
        <end position="341"/>
    </location>
</feature>
<feature type="binding site" evidence="1">
    <location>
        <position position="117"/>
    </location>
    <ligand>
        <name>Fe cation</name>
        <dbReference type="ChEBI" id="CHEBI:24875"/>
    </ligand>
</feature>
<feature type="binding site" evidence="1">
    <location>
        <position position="121"/>
    </location>
    <ligand>
        <name>Fe cation</name>
        <dbReference type="ChEBI" id="CHEBI:24875"/>
    </ligand>
</feature>
<feature type="binding site" evidence="1">
    <location>
        <begin position="139"/>
        <end position="143"/>
    </location>
    <ligand>
        <name>substrate</name>
    </ligand>
</feature>
<feature type="binding site" evidence="1">
    <location>
        <position position="172"/>
    </location>
    <ligand>
        <name>substrate</name>
    </ligand>
</feature>
<feature type="binding site" evidence="1">
    <location>
        <position position="185"/>
    </location>
    <ligand>
        <name>substrate</name>
    </ligand>
</feature>
<feature type="binding site" evidence="1">
    <location>
        <position position="189"/>
    </location>
    <ligand>
        <name>substrate</name>
    </ligand>
</feature>
<feature type="binding site" evidence="1">
    <location>
        <position position="278"/>
    </location>
    <ligand>
        <name>substrate</name>
    </ligand>
</feature>
<feature type="binding site" evidence="1">
    <location>
        <position position="307"/>
    </location>
    <ligand>
        <name>Fe cation</name>
        <dbReference type="ChEBI" id="CHEBI:24875"/>
    </ligand>
</feature>
<reference key="1">
    <citation type="journal article" date="2004" name="J. Mol. Microbiol. Biotechnol.">
        <title>The complete genome sequence of Bacillus licheniformis DSM13, an organism with great industrial potential.</title>
        <authorList>
            <person name="Veith B."/>
            <person name="Herzberg C."/>
            <person name="Steckel S."/>
            <person name="Feesche J."/>
            <person name="Maurer K.H."/>
            <person name="Ehrenreich P."/>
            <person name="Baeumer S."/>
            <person name="Henne A."/>
            <person name="Liesegang H."/>
            <person name="Merkl R."/>
            <person name="Ehrenreich A."/>
            <person name="Gottschalk G."/>
        </authorList>
    </citation>
    <scope>NUCLEOTIDE SEQUENCE [LARGE SCALE GENOMIC DNA]</scope>
    <source>
        <strain>ATCC 14580 / DSM 13 / JCM 2505 / CCUG 7422 / NBRC 12200 / NCIMB 9375 / NCTC 10341 / NRRL NRS-1264 / Gibson 46</strain>
    </source>
</reference>
<reference key="2">
    <citation type="journal article" date="2004" name="Genome Biol.">
        <title>Complete genome sequence of the industrial bacterium Bacillus licheniformis and comparisons with closely related Bacillus species.</title>
        <authorList>
            <person name="Rey M.W."/>
            <person name="Ramaiya P."/>
            <person name="Nelson B.A."/>
            <person name="Brody-Karpin S.D."/>
            <person name="Zaretsky E.J."/>
            <person name="Tang M."/>
            <person name="Lopez de Leon A."/>
            <person name="Xiang H."/>
            <person name="Gusti V."/>
            <person name="Clausen I.G."/>
            <person name="Olsen P.B."/>
            <person name="Rasmussen M.D."/>
            <person name="Andersen J.T."/>
            <person name="Joergensen P.L."/>
            <person name="Larsen T.S."/>
            <person name="Sorokin A."/>
            <person name="Bolotin A."/>
            <person name="Lapidus A."/>
            <person name="Galleron N."/>
            <person name="Ehrlich S.D."/>
            <person name="Berka R.M."/>
        </authorList>
    </citation>
    <scope>NUCLEOTIDE SEQUENCE [LARGE SCALE GENOMIC DNA]</scope>
    <source>
        <strain>ATCC 14580 / DSM 13 / JCM 2505 / CCUG 7422 / NBRC 12200 / NCIMB 9375 / NCTC 10341 / NRRL NRS-1264 / Gibson 46</strain>
    </source>
</reference>
<gene>
    <name evidence="1" type="primary">tsaD</name>
    <name type="synonym">gcp</name>
    <name type="ordered locus">BLi00615</name>
    <name type="ordered locus">BL00845</name>
</gene>
<organism>
    <name type="scientific">Bacillus licheniformis (strain ATCC 14580 / DSM 13 / JCM 2505 / CCUG 7422 / NBRC 12200 / NCIMB 9375 / NCTC 10341 / NRRL NRS-1264 / Gibson 46)</name>
    <dbReference type="NCBI Taxonomy" id="279010"/>
    <lineage>
        <taxon>Bacteria</taxon>
        <taxon>Bacillati</taxon>
        <taxon>Bacillota</taxon>
        <taxon>Bacilli</taxon>
        <taxon>Bacillales</taxon>
        <taxon>Bacillaceae</taxon>
        <taxon>Bacillus</taxon>
    </lineage>
</organism>